<reference key="1">
    <citation type="journal article" date="2003" name="Nature">
        <title>The genome sequence of Bacillus anthracis Ames and comparison to closely related bacteria.</title>
        <authorList>
            <person name="Read T.D."/>
            <person name="Peterson S.N."/>
            <person name="Tourasse N.J."/>
            <person name="Baillie L.W."/>
            <person name="Paulsen I.T."/>
            <person name="Nelson K.E."/>
            <person name="Tettelin H."/>
            <person name="Fouts D.E."/>
            <person name="Eisen J.A."/>
            <person name="Gill S.R."/>
            <person name="Holtzapple E.K."/>
            <person name="Okstad O.A."/>
            <person name="Helgason E."/>
            <person name="Rilstone J."/>
            <person name="Wu M."/>
            <person name="Kolonay J.F."/>
            <person name="Beanan M.J."/>
            <person name="Dodson R.J."/>
            <person name="Brinkac L.M."/>
            <person name="Gwinn M.L."/>
            <person name="DeBoy R.T."/>
            <person name="Madpu R."/>
            <person name="Daugherty S.C."/>
            <person name="Durkin A.S."/>
            <person name="Haft D.H."/>
            <person name="Nelson W.C."/>
            <person name="Peterson J.D."/>
            <person name="Pop M."/>
            <person name="Khouri H.M."/>
            <person name="Radune D."/>
            <person name="Benton J.L."/>
            <person name="Mahamoud Y."/>
            <person name="Jiang L."/>
            <person name="Hance I.R."/>
            <person name="Weidman J.F."/>
            <person name="Berry K.J."/>
            <person name="Plaut R.D."/>
            <person name="Wolf A.M."/>
            <person name="Watkins K.L."/>
            <person name="Nierman W.C."/>
            <person name="Hazen A."/>
            <person name="Cline R.T."/>
            <person name="Redmond C."/>
            <person name="Thwaite J.E."/>
            <person name="White O."/>
            <person name="Salzberg S.L."/>
            <person name="Thomason B."/>
            <person name="Friedlander A.M."/>
            <person name="Koehler T.M."/>
            <person name="Hanna P.C."/>
            <person name="Kolstoe A.-B."/>
            <person name="Fraser C.M."/>
        </authorList>
    </citation>
    <scope>NUCLEOTIDE SEQUENCE [LARGE SCALE GENOMIC DNA]</scope>
    <source>
        <strain>Ames / isolate Porton</strain>
    </source>
</reference>
<reference key="2">
    <citation type="journal article" date="2009" name="J. Bacteriol.">
        <title>The complete genome sequence of Bacillus anthracis Ames 'Ancestor'.</title>
        <authorList>
            <person name="Ravel J."/>
            <person name="Jiang L."/>
            <person name="Stanley S.T."/>
            <person name="Wilson M.R."/>
            <person name="Decker R.S."/>
            <person name="Read T.D."/>
            <person name="Worsham P."/>
            <person name="Keim P.S."/>
            <person name="Salzberg S.L."/>
            <person name="Fraser-Liggett C.M."/>
            <person name="Rasko D.A."/>
        </authorList>
    </citation>
    <scope>NUCLEOTIDE SEQUENCE [LARGE SCALE GENOMIC DNA]</scope>
    <source>
        <strain>Ames ancestor</strain>
    </source>
</reference>
<reference key="3">
    <citation type="submission" date="2004-01" db="EMBL/GenBank/DDBJ databases">
        <title>Complete genome sequence of Bacillus anthracis Sterne.</title>
        <authorList>
            <person name="Brettin T.S."/>
            <person name="Bruce D."/>
            <person name="Challacombe J.F."/>
            <person name="Gilna P."/>
            <person name="Han C."/>
            <person name="Hill K."/>
            <person name="Hitchcock P."/>
            <person name="Jackson P."/>
            <person name="Keim P."/>
            <person name="Longmire J."/>
            <person name="Lucas S."/>
            <person name="Okinaka R."/>
            <person name="Richardson P."/>
            <person name="Rubin E."/>
            <person name="Tice H."/>
        </authorList>
    </citation>
    <scope>NUCLEOTIDE SEQUENCE [LARGE SCALE GENOMIC DNA]</scope>
    <source>
        <strain>Sterne</strain>
    </source>
</reference>
<protein>
    <recommendedName>
        <fullName evidence="1">Ribonuclease HII</fullName>
        <shortName evidence="1">RNase HII</shortName>
        <ecNumber evidence="1">3.1.26.4</ecNumber>
    </recommendedName>
</protein>
<evidence type="ECO:0000255" key="1">
    <source>
        <dbReference type="HAMAP-Rule" id="MF_00052"/>
    </source>
</evidence>
<evidence type="ECO:0000255" key="2">
    <source>
        <dbReference type="PROSITE-ProRule" id="PRU01319"/>
    </source>
</evidence>
<feature type="chain" id="PRO_0000111535" description="Ribonuclease HII">
    <location>
        <begin position="1"/>
        <end position="257"/>
    </location>
</feature>
<feature type="domain" description="RNase H type-2" evidence="2">
    <location>
        <begin position="72"/>
        <end position="257"/>
    </location>
</feature>
<feature type="binding site" evidence="1">
    <location>
        <position position="78"/>
    </location>
    <ligand>
        <name>a divalent metal cation</name>
        <dbReference type="ChEBI" id="CHEBI:60240"/>
    </ligand>
</feature>
<feature type="binding site" evidence="1">
    <location>
        <position position="79"/>
    </location>
    <ligand>
        <name>a divalent metal cation</name>
        <dbReference type="ChEBI" id="CHEBI:60240"/>
    </ligand>
</feature>
<feature type="binding site" evidence="1">
    <location>
        <position position="170"/>
    </location>
    <ligand>
        <name>a divalent metal cation</name>
        <dbReference type="ChEBI" id="CHEBI:60240"/>
    </ligand>
</feature>
<organism>
    <name type="scientific">Bacillus anthracis</name>
    <dbReference type="NCBI Taxonomy" id="1392"/>
    <lineage>
        <taxon>Bacteria</taxon>
        <taxon>Bacillati</taxon>
        <taxon>Bacillota</taxon>
        <taxon>Bacilli</taxon>
        <taxon>Bacillales</taxon>
        <taxon>Bacillaceae</taxon>
        <taxon>Bacillus</taxon>
        <taxon>Bacillus cereus group</taxon>
    </lineage>
</organism>
<sequence length="257" mass="28875">MQKVTIQEAEHLLQEIISEEDDRFQILIKDERKGVQKLISKWYKQKELAQKEKEKFLEMSKYENALREKGLTYIAGIDEVGRGPLAGPVVTAAVILPEDFYIPGLNDSKKLSEAKRERFYGEIKAKAIAIGVGIVSPQVIDEINIYQATKQAMLDAIANLSCTPEYLLIDAMKLPAPIPQTSIIKGDAKSISISAASIIAKVTRDRMMKELGEKYPAYGFEQHMGYGTKQHLEAIEAHGVLEEHRKSFAPIKDMIKK</sequence>
<proteinExistence type="inferred from homology"/>
<comment type="function">
    <text evidence="1">Endonuclease that specifically degrades the RNA of RNA-DNA hybrids.</text>
</comment>
<comment type="catalytic activity">
    <reaction evidence="1">
        <text>Endonucleolytic cleavage to 5'-phosphomonoester.</text>
        <dbReference type="EC" id="3.1.26.4"/>
    </reaction>
</comment>
<comment type="cofactor">
    <cofactor evidence="1">
        <name>Mn(2+)</name>
        <dbReference type="ChEBI" id="CHEBI:29035"/>
    </cofactor>
    <cofactor evidence="1">
        <name>Mg(2+)</name>
        <dbReference type="ChEBI" id="CHEBI:18420"/>
    </cofactor>
    <text evidence="1">Manganese or magnesium. Binds 1 divalent metal ion per monomer in the absence of substrate. May bind a second metal ion after substrate binding.</text>
</comment>
<comment type="subcellular location">
    <subcellularLocation>
        <location evidence="1">Cytoplasm</location>
    </subcellularLocation>
</comment>
<comment type="similarity">
    <text evidence="1">Belongs to the RNase HII family.</text>
</comment>
<keyword id="KW-0963">Cytoplasm</keyword>
<keyword id="KW-0255">Endonuclease</keyword>
<keyword id="KW-0378">Hydrolase</keyword>
<keyword id="KW-0464">Manganese</keyword>
<keyword id="KW-0479">Metal-binding</keyword>
<keyword id="KW-0540">Nuclease</keyword>
<keyword id="KW-1185">Reference proteome</keyword>
<name>RNH2_BACAN</name>
<accession>Q81WJ9</accession>
<accession>Q6HUP9</accession>
<accession>Q6KNY1</accession>
<dbReference type="EC" id="3.1.26.4" evidence="1"/>
<dbReference type="EMBL" id="AE016879">
    <property type="protein sequence ID" value="AAP27703.1"/>
    <property type="molecule type" value="Genomic_DNA"/>
</dbReference>
<dbReference type="EMBL" id="AE017334">
    <property type="protein sequence ID" value="AAT33089.1"/>
    <property type="molecule type" value="Genomic_DNA"/>
</dbReference>
<dbReference type="EMBL" id="AE017225">
    <property type="protein sequence ID" value="AAT55990.1"/>
    <property type="molecule type" value="Genomic_DNA"/>
</dbReference>
<dbReference type="RefSeq" id="NP_846217.1">
    <property type="nucleotide sequence ID" value="NC_003997.3"/>
</dbReference>
<dbReference type="RefSeq" id="WP_001174712.1">
    <property type="nucleotide sequence ID" value="NZ_WXXJ01000026.1"/>
</dbReference>
<dbReference type="RefSeq" id="YP_029939.1">
    <property type="nucleotide sequence ID" value="NC_005945.1"/>
</dbReference>
<dbReference type="SMR" id="Q81WJ9"/>
<dbReference type="STRING" id="261594.GBAA_3975"/>
<dbReference type="DNASU" id="1086784"/>
<dbReference type="GeneID" id="45023665"/>
<dbReference type="KEGG" id="ban:BA_3975"/>
<dbReference type="KEGG" id="banh:HYU01_19425"/>
<dbReference type="KEGG" id="bar:GBAA_3975"/>
<dbReference type="KEGG" id="bat:BAS3688"/>
<dbReference type="PATRIC" id="fig|198094.11.peg.3945"/>
<dbReference type="eggNOG" id="COG0164">
    <property type="taxonomic scope" value="Bacteria"/>
</dbReference>
<dbReference type="HOGENOM" id="CLU_036532_2_1_9"/>
<dbReference type="OMA" id="YPTKLHL"/>
<dbReference type="OrthoDB" id="9803420at2"/>
<dbReference type="Proteomes" id="UP000000427">
    <property type="component" value="Chromosome"/>
</dbReference>
<dbReference type="Proteomes" id="UP000000594">
    <property type="component" value="Chromosome"/>
</dbReference>
<dbReference type="GO" id="GO:0005737">
    <property type="term" value="C:cytoplasm"/>
    <property type="evidence" value="ECO:0007669"/>
    <property type="project" value="UniProtKB-SubCell"/>
</dbReference>
<dbReference type="GO" id="GO:0032299">
    <property type="term" value="C:ribonuclease H2 complex"/>
    <property type="evidence" value="ECO:0007669"/>
    <property type="project" value="TreeGrafter"/>
</dbReference>
<dbReference type="GO" id="GO:0030145">
    <property type="term" value="F:manganese ion binding"/>
    <property type="evidence" value="ECO:0007669"/>
    <property type="project" value="UniProtKB-UniRule"/>
</dbReference>
<dbReference type="GO" id="GO:0003723">
    <property type="term" value="F:RNA binding"/>
    <property type="evidence" value="ECO:0007669"/>
    <property type="project" value="InterPro"/>
</dbReference>
<dbReference type="GO" id="GO:0004523">
    <property type="term" value="F:RNA-DNA hybrid ribonuclease activity"/>
    <property type="evidence" value="ECO:0007669"/>
    <property type="project" value="UniProtKB-UniRule"/>
</dbReference>
<dbReference type="GO" id="GO:0043137">
    <property type="term" value="P:DNA replication, removal of RNA primer"/>
    <property type="evidence" value="ECO:0007669"/>
    <property type="project" value="TreeGrafter"/>
</dbReference>
<dbReference type="GO" id="GO:0006298">
    <property type="term" value="P:mismatch repair"/>
    <property type="evidence" value="ECO:0007669"/>
    <property type="project" value="TreeGrafter"/>
</dbReference>
<dbReference type="CDD" id="cd07182">
    <property type="entry name" value="RNase_HII_bacteria_HII_like"/>
    <property type="match status" value="1"/>
</dbReference>
<dbReference type="FunFam" id="3.30.420.10:FF:000006">
    <property type="entry name" value="Ribonuclease HII"/>
    <property type="match status" value="1"/>
</dbReference>
<dbReference type="Gene3D" id="3.30.420.10">
    <property type="entry name" value="Ribonuclease H-like superfamily/Ribonuclease H"/>
    <property type="match status" value="1"/>
</dbReference>
<dbReference type="HAMAP" id="MF_00052_B">
    <property type="entry name" value="RNase_HII_B"/>
    <property type="match status" value="1"/>
</dbReference>
<dbReference type="InterPro" id="IPR022898">
    <property type="entry name" value="RNase_HII"/>
</dbReference>
<dbReference type="InterPro" id="IPR001352">
    <property type="entry name" value="RNase_HII/HIII"/>
</dbReference>
<dbReference type="InterPro" id="IPR024567">
    <property type="entry name" value="RNase_HII/HIII_dom"/>
</dbReference>
<dbReference type="InterPro" id="IPR012337">
    <property type="entry name" value="RNaseH-like_sf"/>
</dbReference>
<dbReference type="InterPro" id="IPR036397">
    <property type="entry name" value="RNaseH_sf"/>
</dbReference>
<dbReference type="NCBIfam" id="NF000594">
    <property type="entry name" value="PRK00015.1-1"/>
    <property type="match status" value="1"/>
</dbReference>
<dbReference type="NCBIfam" id="NF000595">
    <property type="entry name" value="PRK00015.1-3"/>
    <property type="match status" value="1"/>
</dbReference>
<dbReference type="PANTHER" id="PTHR10954">
    <property type="entry name" value="RIBONUCLEASE H2 SUBUNIT A"/>
    <property type="match status" value="1"/>
</dbReference>
<dbReference type="PANTHER" id="PTHR10954:SF18">
    <property type="entry name" value="RIBONUCLEASE HII"/>
    <property type="match status" value="1"/>
</dbReference>
<dbReference type="Pfam" id="PF01351">
    <property type="entry name" value="RNase_HII"/>
    <property type="match status" value="1"/>
</dbReference>
<dbReference type="SUPFAM" id="SSF53098">
    <property type="entry name" value="Ribonuclease H-like"/>
    <property type="match status" value="1"/>
</dbReference>
<dbReference type="PROSITE" id="PS51975">
    <property type="entry name" value="RNASE_H_2"/>
    <property type="match status" value="1"/>
</dbReference>
<gene>
    <name evidence="1" type="primary">rnhB</name>
    <name type="ordered locus">BA_3975</name>
    <name type="ordered locus">GBAA_3975</name>
    <name type="ordered locus">BAS3688</name>
</gene>